<reference key="1">
    <citation type="submission" date="2006-08" db="EMBL/GenBank/DDBJ databases">
        <title>Complete sequence of chromosome 1 of Burkholderia cenocepacia HI2424.</title>
        <authorList>
            <person name="Copeland A."/>
            <person name="Lucas S."/>
            <person name="Lapidus A."/>
            <person name="Barry K."/>
            <person name="Detter J.C."/>
            <person name="Glavina del Rio T."/>
            <person name="Hammon N."/>
            <person name="Israni S."/>
            <person name="Pitluck S."/>
            <person name="Chain P."/>
            <person name="Malfatti S."/>
            <person name="Shin M."/>
            <person name="Vergez L."/>
            <person name="Schmutz J."/>
            <person name="Larimer F."/>
            <person name="Land M."/>
            <person name="Hauser L."/>
            <person name="Kyrpides N."/>
            <person name="Kim E."/>
            <person name="LiPuma J.J."/>
            <person name="Gonzalez C.F."/>
            <person name="Konstantinidis K."/>
            <person name="Tiedje J.M."/>
            <person name="Richardson P."/>
        </authorList>
    </citation>
    <scope>NUCLEOTIDE SEQUENCE [LARGE SCALE GENOMIC DNA]</scope>
    <source>
        <strain>HI2424</strain>
    </source>
</reference>
<dbReference type="EMBL" id="CP000458">
    <property type="protein sequence ID" value="ABK07505.1"/>
    <property type="molecule type" value="Genomic_DNA"/>
</dbReference>
<dbReference type="RefSeq" id="WP_006476838.1">
    <property type="nucleotide sequence ID" value="NC_008542.1"/>
</dbReference>
<dbReference type="SMR" id="A0K4S8"/>
<dbReference type="GeneID" id="83047519"/>
<dbReference type="KEGG" id="bch:Bcen2424_0752"/>
<dbReference type="HOGENOM" id="CLU_005965_2_1_4"/>
<dbReference type="GO" id="GO:0005524">
    <property type="term" value="F:ATP binding"/>
    <property type="evidence" value="ECO:0007669"/>
    <property type="project" value="UniProtKB-UniRule"/>
</dbReference>
<dbReference type="GO" id="GO:0140662">
    <property type="term" value="F:ATP-dependent protein folding chaperone"/>
    <property type="evidence" value="ECO:0007669"/>
    <property type="project" value="InterPro"/>
</dbReference>
<dbReference type="GO" id="GO:0051082">
    <property type="term" value="F:unfolded protein binding"/>
    <property type="evidence" value="ECO:0007669"/>
    <property type="project" value="InterPro"/>
</dbReference>
<dbReference type="CDD" id="cd10234">
    <property type="entry name" value="ASKHA_NBD_HSP70_DnaK-like"/>
    <property type="match status" value="1"/>
</dbReference>
<dbReference type="FunFam" id="2.60.34.10:FF:000014">
    <property type="entry name" value="Chaperone protein DnaK HSP70"/>
    <property type="match status" value="1"/>
</dbReference>
<dbReference type="FunFam" id="3.30.30.30:FF:000003">
    <property type="entry name" value="Heat shock protein 9"/>
    <property type="match status" value="1"/>
</dbReference>
<dbReference type="FunFam" id="1.20.1270.10:FF:000001">
    <property type="entry name" value="Molecular chaperone DnaK"/>
    <property type="match status" value="1"/>
</dbReference>
<dbReference type="FunFam" id="3.30.420.40:FF:000004">
    <property type="entry name" value="Molecular chaperone DnaK"/>
    <property type="match status" value="1"/>
</dbReference>
<dbReference type="FunFam" id="3.90.640.10:FF:000003">
    <property type="entry name" value="Molecular chaperone DnaK"/>
    <property type="match status" value="1"/>
</dbReference>
<dbReference type="Gene3D" id="1.20.1270.10">
    <property type="match status" value="1"/>
</dbReference>
<dbReference type="Gene3D" id="3.30.420.40">
    <property type="match status" value="2"/>
</dbReference>
<dbReference type="Gene3D" id="3.90.640.10">
    <property type="entry name" value="Actin, Chain A, domain 4"/>
    <property type="match status" value="1"/>
</dbReference>
<dbReference type="Gene3D" id="2.60.34.10">
    <property type="entry name" value="Substrate Binding Domain Of DNAk, Chain A, domain 1"/>
    <property type="match status" value="1"/>
</dbReference>
<dbReference type="HAMAP" id="MF_00332">
    <property type="entry name" value="DnaK"/>
    <property type="match status" value="1"/>
</dbReference>
<dbReference type="InterPro" id="IPR043129">
    <property type="entry name" value="ATPase_NBD"/>
</dbReference>
<dbReference type="InterPro" id="IPR012725">
    <property type="entry name" value="Chaperone_DnaK"/>
</dbReference>
<dbReference type="InterPro" id="IPR018181">
    <property type="entry name" value="Heat_shock_70_CS"/>
</dbReference>
<dbReference type="InterPro" id="IPR029048">
    <property type="entry name" value="HSP70_C_sf"/>
</dbReference>
<dbReference type="InterPro" id="IPR029047">
    <property type="entry name" value="HSP70_peptide-bd_sf"/>
</dbReference>
<dbReference type="InterPro" id="IPR013126">
    <property type="entry name" value="Hsp_70_fam"/>
</dbReference>
<dbReference type="NCBIfam" id="NF001413">
    <property type="entry name" value="PRK00290.1"/>
    <property type="match status" value="1"/>
</dbReference>
<dbReference type="NCBIfam" id="NF003520">
    <property type="entry name" value="PRK05183.1"/>
    <property type="match status" value="1"/>
</dbReference>
<dbReference type="NCBIfam" id="TIGR02350">
    <property type="entry name" value="prok_dnaK"/>
    <property type="match status" value="1"/>
</dbReference>
<dbReference type="PANTHER" id="PTHR19375">
    <property type="entry name" value="HEAT SHOCK PROTEIN 70KDA"/>
    <property type="match status" value="1"/>
</dbReference>
<dbReference type="Pfam" id="PF00012">
    <property type="entry name" value="HSP70"/>
    <property type="match status" value="1"/>
</dbReference>
<dbReference type="PRINTS" id="PR00301">
    <property type="entry name" value="HEATSHOCK70"/>
</dbReference>
<dbReference type="SUPFAM" id="SSF53067">
    <property type="entry name" value="Actin-like ATPase domain"/>
    <property type="match status" value="2"/>
</dbReference>
<dbReference type="SUPFAM" id="SSF100934">
    <property type="entry name" value="Heat shock protein 70kD (HSP70), C-terminal subdomain"/>
    <property type="match status" value="1"/>
</dbReference>
<dbReference type="SUPFAM" id="SSF100920">
    <property type="entry name" value="Heat shock protein 70kD (HSP70), peptide-binding domain"/>
    <property type="match status" value="1"/>
</dbReference>
<dbReference type="PROSITE" id="PS00297">
    <property type="entry name" value="HSP70_1"/>
    <property type="match status" value="1"/>
</dbReference>
<dbReference type="PROSITE" id="PS00329">
    <property type="entry name" value="HSP70_2"/>
    <property type="match status" value="1"/>
</dbReference>
<dbReference type="PROSITE" id="PS01036">
    <property type="entry name" value="HSP70_3"/>
    <property type="match status" value="1"/>
</dbReference>
<gene>
    <name evidence="1" type="primary">dnaK</name>
    <name type="ordered locus">Bcen2424_0752</name>
</gene>
<protein>
    <recommendedName>
        <fullName evidence="1">Chaperone protein DnaK</fullName>
    </recommendedName>
    <alternativeName>
        <fullName evidence="1">HSP70</fullName>
    </alternativeName>
    <alternativeName>
        <fullName evidence="1">Heat shock 70 kDa protein</fullName>
    </alternativeName>
    <alternativeName>
        <fullName evidence="1">Heat shock protein 70</fullName>
    </alternativeName>
</protein>
<proteinExistence type="inferred from homology"/>
<feature type="chain" id="PRO_1000059518" description="Chaperone protein DnaK">
    <location>
        <begin position="1"/>
        <end position="650"/>
    </location>
</feature>
<feature type="modified residue" description="Phosphothreonine; by autocatalysis" evidence="1">
    <location>
        <position position="200"/>
    </location>
</feature>
<name>DNAK_BURCH</name>
<evidence type="ECO:0000255" key="1">
    <source>
        <dbReference type="HAMAP-Rule" id="MF_00332"/>
    </source>
</evidence>
<keyword id="KW-0067">ATP-binding</keyword>
<keyword id="KW-0143">Chaperone</keyword>
<keyword id="KW-0547">Nucleotide-binding</keyword>
<keyword id="KW-0597">Phosphoprotein</keyword>
<keyword id="KW-0346">Stress response</keyword>
<organism>
    <name type="scientific">Burkholderia cenocepacia (strain HI2424)</name>
    <dbReference type="NCBI Taxonomy" id="331272"/>
    <lineage>
        <taxon>Bacteria</taxon>
        <taxon>Pseudomonadati</taxon>
        <taxon>Pseudomonadota</taxon>
        <taxon>Betaproteobacteria</taxon>
        <taxon>Burkholderiales</taxon>
        <taxon>Burkholderiaceae</taxon>
        <taxon>Burkholderia</taxon>
        <taxon>Burkholderia cepacia complex</taxon>
    </lineage>
</organism>
<accession>A0K4S8</accession>
<sequence length="650" mass="69830">MGKIIGIDLGTTNSCVAIMEGNQVKVIENSEGTRTTPSIIAYMDDNEVLVGAPAKRQSVTNPKNTLFAVKRLIGRRFEEKEVQKDIGLMPYSIIKADNGDAWVEAHGEKLAPPQVSAEVLRKMKKTAEDYLGEPVTEAVITVPAYFNDSQRQATKDAGRIAGLEVKRIINEPTAAALAFGLDKVEKGDRKIAVYDLGGGTFDVSIIEIADVDGEMQFEVLSTNGDTFLGGEDFDQRIIDYIIGEFKKEQGVDLSKDVLALQRLKEAAEKAKIELSSGQQTEINLPYITADASGPKHLNLKITRAKLEALVEDLVERTIEPCRIAIKDAGVKVSDIDDVILVGGQTRMPKVMEKVKEFFGKDPRRDVNPDEAVAVGAAIQGQVLSGDRKDVLLLDVTPLSLGIETLGGVMTKMINKNTTIPTKHAQVYSTADDNQGAVTIKVFQGEREMAAGNKLLGEFNLEGIPPAPRGVPQIEVTFDIDANGILHVGAKDKATGKENKITIKANSGLSEAEIDQMIKDAEANAAEDHKLRELADSRNQGDALVHSTKKALTEYGDKLDAGEKEAIEASLKSLEEVLKDTSADKAAIDAKVEELGKVSQKLGEKMYADMQAQQAGAAGAAGAAEGAAHAGGAQQAADDVVDAEFKEVKKD</sequence>
<comment type="function">
    <text evidence="1">Acts as a chaperone.</text>
</comment>
<comment type="induction">
    <text evidence="1">By stress conditions e.g. heat shock.</text>
</comment>
<comment type="similarity">
    <text evidence="1">Belongs to the heat shock protein 70 family.</text>
</comment>